<gene>
    <name evidence="1" type="primary">rlmN</name>
    <name type="ordered locus">CTC_01223</name>
</gene>
<name>RLMN_CLOTE</name>
<feature type="chain" id="PRO_0000350131" description="Probable dual-specificity RNA methyltransferase RlmN">
    <location>
        <begin position="1"/>
        <end position="349"/>
    </location>
</feature>
<feature type="domain" description="Radical SAM core" evidence="2">
    <location>
        <begin position="99"/>
        <end position="329"/>
    </location>
</feature>
<feature type="active site" description="Proton acceptor" evidence="1">
    <location>
        <position position="93"/>
    </location>
</feature>
<feature type="active site" description="S-methylcysteine intermediate" evidence="1">
    <location>
        <position position="334"/>
    </location>
</feature>
<feature type="binding site" evidence="1">
    <location>
        <position position="113"/>
    </location>
    <ligand>
        <name>[4Fe-4S] cluster</name>
        <dbReference type="ChEBI" id="CHEBI:49883"/>
        <note>4Fe-4S-S-AdoMet</note>
    </ligand>
</feature>
<feature type="binding site" evidence="1">
    <location>
        <position position="117"/>
    </location>
    <ligand>
        <name>[4Fe-4S] cluster</name>
        <dbReference type="ChEBI" id="CHEBI:49883"/>
        <note>4Fe-4S-S-AdoMet</note>
    </ligand>
</feature>
<feature type="binding site" evidence="1">
    <location>
        <position position="120"/>
    </location>
    <ligand>
        <name>[4Fe-4S] cluster</name>
        <dbReference type="ChEBI" id="CHEBI:49883"/>
        <note>4Fe-4S-S-AdoMet</note>
    </ligand>
</feature>
<feature type="binding site" evidence="1">
    <location>
        <begin position="160"/>
        <end position="161"/>
    </location>
    <ligand>
        <name>S-adenosyl-L-methionine</name>
        <dbReference type="ChEBI" id="CHEBI:59789"/>
    </ligand>
</feature>
<feature type="binding site" evidence="1">
    <location>
        <position position="192"/>
    </location>
    <ligand>
        <name>S-adenosyl-L-methionine</name>
        <dbReference type="ChEBI" id="CHEBI:59789"/>
    </ligand>
</feature>
<feature type="binding site" evidence="1">
    <location>
        <begin position="215"/>
        <end position="217"/>
    </location>
    <ligand>
        <name>S-adenosyl-L-methionine</name>
        <dbReference type="ChEBI" id="CHEBI:59789"/>
    </ligand>
</feature>
<feature type="binding site" evidence="1">
    <location>
        <position position="291"/>
    </location>
    <ligand>
        <name>S-adenosyl-L-methionine</name>
        <dbReference type="ChEBI" id="CHEBI:59789"/>
    </ligand>
</feature>
<feature type="disulfide bond" description="(transient)" evidence="1">
    <location>
        <begin position="106"/>
        <end position="334"/>
    </location>
</feature>
<proteinExistence type="inferred from homology"/>
<reference key="1">
    <citation type="journal article" date="2003" name="Proc. Natl. Acad. Sci. U.S.A.">
        <title>The genome sequence of Clostridium tetani, the causative agent of tetanus disease.</title>
        <authorList>
            <person name="Brueggemann H."/>
            <person name="Baeumer S."/>
            <person name="Fricke W.F."/>
            <person name="Wiezer A."/>
            <person name="Liesegang H."/>
            <person name="Decker I."/>
            <person name="Herzberg C."/>
            <person name="Martinez-Arias R."/>
            <person name="Merkl R."/>
            <person name="Henne A."/>
            <person name="Gottschalk G."/>
        </authorList>
    </citation>
    <scope>NUCLEOTIDE SEQUENCE [LARGE SCALE GENOMIC DNA]</scope>
    <source>
        <strain>Massachusetts / E88</strain>
    </source>
</reference>
<accession>Q895P8</accession>
<sequence>MFNMINLLDLSLEDLKKWMIENKEKEFRAKQVLDWVYKGVYNFEAMKNIPKVITNKLQENFYLSVPSVVQKYVSKDESTVKFLFKYNDGNIIESVVMKYKHGNTICVSTQVGCKMGCTFCASTIGGIVRSLSHGEILGQVLKAQEETGERISNIVMMGSGEPLDNYDNSLNFIRMVNAENGLNIGQRHITLSTCGIVPKIRQLAEENLQITLAISLHAPNDNIRRKTMPIASVYSVEELIEACNYYINKTNRRITFEYALVSNLNDKEVHAEELATLLKGMLCHVNLIPVNKIDEKDFKSSSTNRIKNFSNILLKSGIQTTIRREMGSDINAACGQLRRRYVKNNSKEV</sequence>
<dbReference type="EC" id="2.1.1.192" evidence="1"/>
<dbReference type="EMBL" id="AE015927">
    <property type="protein sequence ID" value="AAO35792.1"/>
    <property type="molecule type" value="Genomic_DNA"/>
</dbReference>
<dbReference type="SMR" id="Q895P8"/>
<dbReference type="STRING" id="212717.CTC_01223"/>
<dbReference type="KEGG" id="ctc:CTC_01223"/>
<dbReference type="HOGENOM" id="CLU_029101_0_1_9"/>
<dbReference type="Proteomes" id="UP000001412">
    <property type="component" value="Chromosome"/>
</dbReference>
<dbReference type="GO" id="GO:0005737">
    <property type="term" value="C:cytoplasm"/>
    <property type="evidence" value="ECO:0007669"/>
    <property type="project" value="UniProtKB-SubCell"/>
</dbReference>
<dbReference type="GO" id="GO:0051539">
    <property type="term" value="F:4 iron, 4 sulfur cluster binding"/>
    <property type="evidence" value="ECO:0007669"/>
    <property type="project" value="UniProtKB-UniRule"/>
</dbReference>
<dbReference type="GO" id="GO:0046872">
    <property type="term" value="F:metal ion binding"/>
    <property type="evidence" value="ECO:0007669"/>
    <property type="project" value="UniProtKB-KW"/>
</dbReference>
<dbReference type="GO" id="GO:0070040">
    <property type="term" value="F:rRNA (adenine(2503)-C2-)-methyltransferase activity"/>
    <property type="evidence" value="ECO:0007669"/>
    <property type="project" value="UniProtKB-UniRule"/>
</dbReference>
<dbReference type="GO" id="GO:0019843">
    <property type="term" value="F:rRNA binding"/>
    <property type="evidence" value="ECO:0007669"/>
    <property type="project" value="UniProtKB-UniRule"/>
</dbReference>
<dbReference type="GO" id="GO:0002935">
    <property type="term" value="F:tRNA (adenine(37)-C2)-methyltransferase activity"/>
    <property type="evidence" value="ECO:0007669"/>
    <property type="project" value="UniProtKB-UniRule"/>
</dbReference>
<dbReference type="GO" id="GO:0000049">
    <property type="term" value="F:tRNA binding"/>
    <property type="evidence" value="ECO:0007669"/>
    <property type="project" value="UniProtKB-UniRule"/>
</dbReference>
<dbReference type="GO" id="GO:0070475">
    <property type="term" value="P:rRNA base methylation"/>
    <property type="evidence" value="ECO:0007669"/>
    <property type="project" value="UniProtKB-UniRule"/>
</dbReference>
<dbReference type="GO" id="GO:0030488">
    <property type="term" value="P:tRNA methylation"/>
    <property type="evidence" value="ECO:0007669"/>
    <property type="project" value="UniProtKB-UniRule"/>
</dbReference>
<dbReference type="CDD" id="cd01335">
    <property type="entry name" value="Radical_SAM"/>
    <property type="match status" value="1"/>
</dbReference>
<dbReference type="FunFam" id="3.20.20.70:FF:000014">
    <property type="entry name" value="Probable dual-specificity RNA methyltransferase RlmN"/>
    <property type="match status" value="1"/>
</dbReference>
<dbReference type="Gene3D" id="1.10.150.530">
    <property type="match status" value="1"/>
</dbReference>
<dbReference type="Gene3D" id="3.20.20.70">
    <property type="entry name" value="Aldolase class I"/>
    <property type="match status" value="1"/>
</dbReference>
<dbReference type="HAMAP" id="MF_01849">
    <property type="entry name" value="RNA_methyltr_RlmN"/>
    <property type="match status" value="1"/>
</dbReference>
<dbReference type="InterPro" id="IPR013785">
    <property type="entry name" value="Aldolase_TIM"/>
</dbReference>
<dbReference type="InterPro" id="IPR040072">
    <property type="entry name" value="Methyltransferase_A"/>
</dbReference>
<dbReference type="InterPro" id="IPR048641">
    <property type="entry name" value="RlmN_N"/>
</dbReference>
<dbReference type="InterPro" id="IPR027492">
    <property type="entry name" value="RNA_MTrfase_RlmN"/>
</dbReference>
<dbReference type="InterPro" id="IPR004383">
    <property type="entry name" value="rRNA_lsu_MTrfase_RlmN/Cfr"/>
</dbReference>
<dbReference type="InterPro" id="IPR007197">
    <property type="entry name" value="rSAM"/>
</dbReference>
<dbReference type="NCBIfam" id="TIGR00048">
    <property type="entry name" value="rRNA_mod_RlmN"/>
    <property type="match status" value="1"/>
</dbReference>
<dbReference type="PANTHER" id="PTHR30544">
    <property type="entry name" value="23S RRNA METHYLTRANSFERASE"/>
    <property type="match status" value="1"/>
</dbReference>
<dbReference type="PANTHER" id="PTHR30544:SF5">
    <property type="entry name" value="RADICAL SAM CORE DOMAIN-CONTAINING PROTEIN"/>
    <property type="match status" value="1"/>
</dbReference>
<dbReference type="Pfam" id="PF04055">
    <property type="entry name" value="Radical_SAM"/>
    <property type="match status" value="1"/>
</dbReference>
<dbReference type="Pfam" id="PF21016">
    <property type="entry name" value="RlmN_N"/>
    <property type="match status" value="1"/>
</dbReference>
<dbReference type="PIRSF" id="PIRSF006004">
    <property type="entry name" value="CHP00048"/>
    <property type="match status" value="1"/>
</dbReference>
<dbReference type="SFLD" id="SFLDF00275">
    <property type="entry name" value="adenosine_C2_methyltransferase"/>
    <property type="match status" value="1"/>
</dbReference>
<dbReference type="SFLD" id="SFLDG01062">
    <property type="entry name" value="methyltransferase_(Class_A)"/>
    <property type="match status" value="1"/>
</dbReference>
<dbReference type="SUPFAM" id="SSF102114">
    <property type="entry name" value="Radical SAM enzymes"/>
    <property type="match status" value="1"/>
</dbReference>
<dbReference type="PROSITE" id="PS51918">
    <property type="entry name" value="RADICAL_SAM"/>
    <property type="match status" value="1"/>
</dbReference>
<keyword id="KW-0004">4Fe-4S</keyword>
<keyword id="KW-0963">Cytoplasm</keyword>
<keyword id="KW-1015">Disulfide bond</keyword>
<keyword id="KW-0408">Iron</keyword>
<keyword id="KW-0411">Iron-sulfur</keyword>
<keyword id="KW-0479">Metal-binding</keyword>
<keyword id="KW-0489">Methyltransferase</keyword>
<keyword id="KW-1185">Reference proteome</keyword>
<keyword id="KW-0698">rRNA processing</keyword>
<keyword id="KW-0949">S-adenosyl-L-methionine</keyword>
<keyword id="KW-0808">Transferase</keyword>
<keyword id="KW-0819">tRNA processing</keyword>
<comment type="function">
    <text evidence="1">Specifically methylates position 2 of adenine 2503 in 23S rRNA and position 2 of adenine 37 in tRNAs.</text>
</comment>
<comment type="catalytic activity">
    <reaction evidence="1">
        <text>adenosine(2503) in 23S rRNA + 2 reduced [2Fe-2S]-[ferredoxin] + 2 S-adenosyl-L-methionine = 2-methyladenosine(2503) in 23S rRNA + 5'-deoxyadenosine + L-methionine + 2 oxidized [2Fe-2S]-[ferredoxin] + S-adenosyl-L-homocysteine</text>
        <dbReference type="Rhea" id="RHEA:42916"/>
        <dbReference type="Rhea" id="RHEA-COMP:10000"/>
        <dbReference type="Rhea" id="RHEA-COMP:10001"/>
        <dbReference type="Rhea" id="RHEA-COMP:10152"/>
        <dbReference type="Rhea" id="RHEA-COMP:10282"/>
        <dbReference type="ChEBI" id="CHEBI:17319"/>
        <dbReference type="ChEBI" id="CHEBI:33737"/>
        <dbReference type="ChEBI" id="CHEBI:33738"/>
        <dbReference type="ChEBI" id="CHEBI:57844"/>
        <dbReference type="ChEBI" id="CHEBI:57856"/>
        <dbReference type="ChEBI" id="CHEBI:59789"/>
        <dbReference type="ChEBI" id="CHEBI:74411"/>
        <dbReference type="ChEBI" id="CHEBI:74497"/>
        <dbReference type="EC" id="2.1.1.192"/>
    </reaction>
</comment>
<comment type="catalytic activity">
    <reaction evidence="1">
        <text>adenosine(37) in tRNA + 2 reduced [2Fe-2S]-[ferredoxin] + 2 S-adenosyl-L-methionine = 2-methyladenosine(37) in tRNA + 5'-deoxyadenosine + L-methionine + 2 oxidized [2Fe-2S]-[ferredoxin] + S-adenosyl-L-homocysteine</text>
        <dbReference type="Rhea" id="RHEA:43332"/>
        <dbReference type="Rhea" id="RHEA-COMP:10000"/>
        <dbReference type="Rhea" id="RHEA-COMP:10001"/>
        <dbReference type="Rhea" id="RHEA-COMP:10162"/>
        <dbReference type="Rhea" id="RHEA-COMP:10485"/>
        <dbReference type="ChEBI" id="CHEBI:17319"/>
        <dbReference type="ChEBI" id="CHEBI:33737"/>
        <dbReference type="ChEBI" id="CHEBI:33738"/>
        <dbReference type="ChEBI" id="CHEBI:57844"/>
        <dbReference type="ChEBI" id="CHEBI:57856"/>
        <dbReference type="ChEBI" id="CHEBI:59789"/>
        <dbReference type="ChEBI" id="CHEBI:74411"/>
        <dbReference type="ChEBI" id="CHEBI:74497"/>
        <dbReference type="EC" id="2.1.1.192"/>
    </reaction>
</comment>
<comment type="cofactor">
    <cofactor evidence="1">
        <name>[4Fe-4S] cluster</name>
        <dbReference type="ChEBI" id="CHEBI:49883"/>
    </cofactor>
    <text evidence="1">Binds 1 [4Fe-4S] cluster. The cluster is coordinated with 3 cysteines and an exchangeable S-adenosyl-L-methionine.</text>
</comment>
<comment type="subcellular location">
    <subcellularLocation>
        <location evidence="1">Cytoplasm</location>
    </subcellularLocation>
</comment>
<comment type="miscellaneous">
    <text evidence="1">Reaction proceeds by a ping-pong mechanism involving intermediate methylation of a conserved cysteine residue.</text>
</comment>
<comment type="similarity">
    <text evidence="1">Belongs to the radical SAM superfamily. RlmN family.</text>
</comment>
<protein>
    <recommendedName>
        <fullName evidence="1">Probable dual-specificity RNA methyltransferase RlmN</fullName>
        <ecNumber evidence="1">2.1.1.192</ecNumber>
    </recommendedName>
    <alternativeName>
        <fullName evidence="1">23S rRNA (adenine(2503)-C(2))-methyltransferase</fullName>
    </alternativeName>
    <alternativeName>
        <fullName evidence="1">23S rRNA m2A2503 methyltransferase</fullName>
    </alternativeName>
    <alternativeName>
        <fullName evidence="1">Ribosomal RNA large subunit methyltransferase N</fullName>
    </alternativeName>
    <alternativeName>
        <fullName evidence="1">tRNA (adenine(37)-C(2))-methyltransferase</fullName>
    </alternativeName>
    <alternativeName>
        <fullName evidence="1">tRNA m2A37 methyltransferase</fullName>
    </alternativeName>
</protein>
<organism>
    <name type="scientific">Clostridium tetani (strain Massachusetts / E88)</name>
    <dbReference type="NCBI Taxonomy" id="212717"/>
    <lineage>
        <taxon>Bacteria</taxon>
        <taxon>Bacillati</taxon>
        <taxon>Bacillota</taxon>
        <taxon>Clostridia</taxon>
        <taxon>Eubacteriales</taxon>
        <taxon>Clostridiaceae</taxon>
        <taxon>Clostridium</taxon>
    </lineage>
</organism>
<evidence type="ECO:0000255" key="1">
    <source>
        <dbReference type="HAMAP-Rule" id="MF_01849"/>
    </source>
</evidence>
<evidence type="ECO:0000255" key="2">
    <source>
        <dbReference type="PROSITE-ProRule" id="PRU01266"/>
    </source>
</evidence>